<sequence>MKRQSVSEIREIFLNYFKDKAHAVVPSSSLLPAGDPTLLFTTAGMVQFKPLFTGAVELPYTRATSCQKCLRTTDLEVVGKTERHCTFFEMLGNFSFGDYFKEEAIDYALDCSVNHLGFDKEKIWVTVYTDDDEAEKIWITKGIPKERITRLGKKDNFWGPAGDSGACGPCSELYLDRGVEKGGPDCATSGTCRPGCDCDRFLEFWNIVFNQFNQDTEGNLHPLKQTGIDTGSGLERVALLLQGADSVYDTNELRKIISFYEELSGIKYDDVITLSKMPTQKNNTARIAANQKAAFRVVTDHIRSVLFSIGDGIYPDRTGRGYVIRRLIRRATLFGRKLNFKEPFLYKLVDKVVEIYKPRYPELGKNSAAIQKTILAEEELFLKTLELGLEKIETLVAKTKTSGKTIFSGADAFLLYGTYGFPAEMTEEIVAEQGLDFDKKGFQEELEKDRQLSRESWKANKVSLMTGQSVEKTEFLGYSSLSGKGNIIHLFNENKPAGALKEGQAGAIVLNKTPFYPEGGGQVGDTGFLRQGKNVFKVLDTQKENDVILHFGEVLSGEFSIAQELEAEVEAARRERLRFHHSGTHLLNGALRNLLGDHVLQKGSVVSPEYLRFDFSHPSALTSKEIRKIESWVNESIRKNYPVVTKELPIEDAKKIGAVATFGEKYGDRVRVVQMGDASVEFCGGTHVSHTGEIGYFFIKKESSPGAGNRRIEGVCGPAVIETFQNRFAELTESVQNLNLKIKSELDNEGSKILVNSNVPGPDEIREKLEKEGATAVTFFRDLSEEIASQIEESTSAFLKMKKSLESRDFENNASVIEKVFASSMDTGVGKIVSAIFDDKDPNSLKGLSDNLKVREKNLLVILGSKNADNASVVITCSSQLVSKGIHCGDLVRTVCEMLGGKGGGKPDMAQGGGKEKQNLESAISFAIQLAKQTLTGEKV</sequence>
<reference key="1">
    <citation type="journal article" date="2006" name="Proc. Natl. Acad. Sci. U.S.A.">
        <title>Genome reduction in Leptospira borgpetersenii reflects limited transmission potential.</title>
        <authorList>
            <person name="Bulach D.M."/>
            <person name="Zuerner R.L."/>
            <person name="Wilson P."/>
            <person name="Seemann T."/>
            <person name="McGrath A."/>
            <person name="Cullen P.A."/>
            <person name="Davis J."/>
            <person name="Johnson M."/>
            <person name="Kuczek E."/>
            <person name="Alt D.P."/>
            <person name="Peterson-Burch B."/>
            <person name="Coppel R.L."/>
            <person name="Rood J.I."/>
            <person name="Davies J.K."/>
            <person name="Adler B."/>
        </authorList>
    </citation>
    <scope>NUCLEOTIDE SEQUENCE [LARGE SCALE GENOMIC DNA]</scope>
    <source>
        <strain>JB197</strain>
    </source>
</reference>
<keyword id="KW-0030">Aminoacyl-tRNA synthetase</keyword>
<keyword id="KW-0067">ATP-binding</keyword>
<keyword id="KW-0963">Cytoplasm</keyword>
<keyword id="KW-0436">Ligase</keyword>
<keyword id="KW-0479">Metal-binding</keyword>
<keyword id="KW-0547">Nucleotide-binding</keyword>
<keyword id="KW-0648">Protein biosynthesis</keyword>
<keyword id="KW-0694">RNA-binding</keyword>
<keyword id="KW-0820">tRNA-binding</keyword>
<keyword id="KW-0862">Zinc</keyword>
<protein>
    <recommendedName>
        <fullName evidence="1">Alanine--tRNA ligase</fullName>
        <ecNumber evidence="1">6.1.1.7</ecNumber>
    </recommendedName>
    <alternativeName>
        <fullName evidence="1">Alanyl-tRNA synthetase</fullName>
        <shortName evidence="1">AlaRS</shortName>
    </alternativeName>
</protein>
<comment type="function">
    <text evidence="1">Catalyzes the attachment of alanine to tRNA(Ala) in a two-step reaction: alanine is first activated by ATP to form Ala-AMP and then transferred to the acceptor end of tRNA(Ala). Also edits incorrectly charged Ser-tRNA(Ala) and Gly-tRNA(Ala) via its editing domain.</text>
</comment>
<comment type="catalytic activity">
    <reaction evidence="1">
        <text>tRNA(Ala) + L-alanine + ATP = L-alanyl-tRNA(Ala) + AMP + diphosphate</text>
        <dbReference type="Rhea" id="RHEA:12540"/>
        <dbReference type="Rhea" id="RHEA-COMP:9657"/>
        <dbReference type="Rhea" id="RHEA-COMP:9923"/>
        <dbReference type="ChEBI" id="CHEBI:30616"/>
        <dbReference type="ChEBI" id="CHEBI:33019"/>
        <dbReference type="ChEBI" id="CHEBI:57972"/>
        <dbReference type="ChEBI" id="CHEBI:78442"/>
        <dbReference type="ChEBI" id="CHEBI:78497"/>
        <dbReference type="ChEBI" id="CHEBI:456215"/>
        <dbReference type="EC" id="6.1.1.7"/>
    </reaction>
</comment>
<comment type="cofactor">
    <cofactor evidence="1">
        <name>Zn(2+)</name>
        <dbReference type="ChEBI" id="CHEBI:29105"/>
    </cofactor>
    <text evidence="1">Binds 1 zinc ion per subunit.</text>
</comment>
<comment type="subcellular location">
    <subcellularLocation>
        <location evidence="1">Cytoplasm</location>
    </subcellularLocation>
</comment>
<comment type="domain">
    <text evidence="1">Consists of three domains; the N-terminal catalytic domain, the editing domain and the C-terminal C-Ala domain. The editing domain removes incorrectly charged amino acids, while the C-Ala domain, along with tRNA(Ala), serves as a bridge to cooperatively bring together the editing and aminoacylation centers thus stimulating deacylation of misacylated tRNAs.</text>
</comment>
<comment type="similarity">
    <text evidence="1">Belongs to the class-II aminoacyl-tRNA synthetase family.</text>
</comment>
<proteinExistence type="inferred from homology"/>
<organism>
    <name type="scientific">Leptospira borgpetersenii serovar Hardjo-bovis (strain JB197)</name>
    <dbReference type="NCBI Taxonomy" id="355277"/>
    <lineage>
        <taxon>Bacteria</taxon>
        <taxon>Pseudomonadati</taxon>
        <taxon>Spirochaetota</taxon>
        <taxon>Spirochaetia</taxon>
        <taxon>Leptospirales</taxon>
        <taxon>Leptospiraceae</taxon>
        <taxon>Leptospira</taxon>
    </lineage>
</organism>
<evidence type="ECO:0000255" key="1">
    <source>
        <dbReference type="HAMAP-Rule" id="MF_00036"/>
    </source>
</evidence>
<dbReference type="EC" id="6.1.1.7" evidence="1"/>
<dbReference type="EMBL" id="CP000350">
    <property type="protein sequence ID" value="ABJ76854.1"/>
    <property type="molecule type" value="Genomic_DNA"/>
</dbReference>
<dbReference type="RefSeq" id="WP_011671981.1">
    <property type="nucleotide sequence ID" value="NC_008510.1"/>
</dbReference>
<dbReference type="SMR" id="Q04QG6"/>
<dbReference type="KEGG" id="lbj:LBJ_2392"/>
<dbReference type="HOGENOM" id="CLU_004485_1_1_12"/>
<dbReference type="Proteomes" id="UP000000656">
    <property type="component" value="Chromosome 1"/>
</dbReference>
<dbReference type="GO" id="GO:0005829">
    <property type="term" value="C:cytosol"/>
    <property type="evidence" value="ECO:0007669"/>
    <property type="project" value="TreeGrafter"/>
</dbReference>
<dbReference type="GO" id="GO:0004813">
    <property type="term" value="F:alanine-tRNA ligase activity"/>
    <property type="evidence" value="ECO:0007669"/>
    <property type="project" value="UniProtKB-UniRule"/>
</dbReference>
<dbReference type="GO" id="GO:0002161">
    <property type="term" value="F:aminoacyl-tRNA deacylase activity"/>
    <property type="evidence" value="ECO:0007669"/>
    <property type="project" value="TreeGrafter"/>
</dbReference>
<dbReference type="GO" id="GO:0005524">
    <property type="term" value="F:ATP binding"/>
    <property type="evidence" value="ECO:0007669"/>
    <property type="project" value="UniProtKB-UniRule"/>
</dbReference>
<dbReference type="GO" id="GO:0000049">
    <property type="term" value="F:tRNA binding"/>
    <property type="evidence" value="ECO:0007669"/>
    <property type="project" value="UniProtKB-KW"/>
</dbReference>
<dbReference type="GO" id="GO:0008270">
    <property type="term" value="F:zinc ion binding"/>
    <property type="evidence" value="ECO:0007669"/>
    <property type="project" value="UniProtKB-UniRule"/>
</dbReference>
<dbReference type="GO" id="GO:0006419">
    <property type="term" value="P:alanyl-tRNA aminoacylation"/>
    <property type="evidence" value="ECO:0007669"/>
    <property type="project" value="UniProtKB-UniRule"/>
</dbReference>
<dbReference type="CDD" id="cd00673">
    <property type="entry name" value="AlaRS_core"/>
    <property type="match status" value="1"/>
</dbReference>
<dbReference type="FunFam" id="2.40.30.130:FF:000001">
    <property type="entry name" value="Alanine--tRNA ligase"/>
    <property type="match status" value="1"/>
</dbReference>
<dbReference type="FunFam" id="3.10.310.40:FF:000001">
    <property type="entry name" value="Alanine--tRNA ligase"/>
    <property type="match status" value="1"/>
</dbReference>
<dbReference type="FunFam" id="3.30.54.20:FF:000001">
    <property type="entry name" value="Alanine--tRNA ligase"/>
    <property type="match status" value="1"/>
</dbReference>
<dbReference type="FunFam" id="3.30.930.10:FF:000004">
    <property type="entry name" value="Alanine--tRNA ligase"/>
    <property type="match status" value="1"/>
</dbReference>
<dbReference type="FunFam" id="3.30.980.10:FF:000004">
    <property type="entry name" value="Alanine--tRNA ligase, cytoplasmic"/>
    <property type="match status" value="1"/>
</dbReference>
<dbReference type="Gene3D" id="2.40.30.130">
    <property type="match status" value="1"/>
</dbReference>
<dbReference type="Gene3D" id="3.10.310.40">
    <property type="match status" value="1"/>
</dbReference>
<dbReference type="Gene3D" id="3.30.54.20">
    <property type="match status" value="1"/>
</dbReference>
<dbReference type="Gene3D" id="3.30.930.10">
    <property type="entry name" value="Bira Bifunctional Protein, Domain 2"/>
    <property type="match status" value="1"/>
</dbReference>
<dbReference type="Gene3D" id="3.30.980.10">
    <property type="entry name" value="Threonyl-trna Synthetase, Chain A, domain 2"/>
    <property type="match status" value="1"/>
</dbReference>
<dbReference type="HAMAP" id="MF_00036_B">
    <property type="entry name" value="Ala_tRNA_synth_B"/>
    <property type="match status" value="1"/>
</dbReference>
<dbReference type="InterPro" id="IPR045864">
    <property type="entry name" value="aa-tRNA-synth_II/BPL/LPL"/>
</dbReference>
<dbReference type="InterPro" id="IPR002318">
    <property type="entry name" value="Ala-tRNA-lgiase_IIc"/>
</dbReference>
<dbReference type="InterPro" id="IPR018162">
    <property type="entry name" value="Ala-tRNA-ligase_IIc_anticod-bd"/>
</dbReference>
<dbReference type="InterPro" id="IPR018165">
    <property type="entry name" value="Ala-tRNA-synth_IIc_core"/>
</dbReference>
<dbReference type="InterPro" id="IPR018164">
    <property type="entry name" value="Ala-tRNA-synth_IIc_N"/>
</dbReference>
<dbReference type="InterPro" id="IPR050058">
    <property type="entry name" value="Ala-tRNA_ligase"/>
</dbReference>
<dbReference type="InterPro" id="IPR023033">
    <property type="entry name" value="Ala_tRNA_ligase_euk/bac"/>
</dbReference>
<dbReference type="InterPro" id="IPR003156">
    <property type="entry name" value="DHHA1_dom"/>
</dbReference>
<dbReference type="InterPro" id="IPR018163">
    <property type="entry name" value="Thr/Ala-tRNA-synth_IIc_edit"/>
</dbReference>
<dbReference type="InterPro" id="IPR009000">
    <property type="entry name" value="Transl_B-barrel_sf"/>
</dbReference>
<dbReference type="InterPro" id="IPR012947">
    <property type="entry name" value="tRNA_SAD"/>
</dbReference>
<dbReference type="NCBIfam" id="TIGR00344">
    <property type="entry name" value="alaS"/>
    <property type="match status" value="1"/>
</dbReference>
<dbReference type="PANTHER" id="PTHR11777:SF9">
    <property type="entry name" value="ALANINE--TRNA LIGASE, CYTOPLASMIC"/>
    <property type="match status" value="1"/>
</dbReference>
<dbReference type="PANTHER" id="PTHR11777">
    <property type="entry name" value="ALANYL-TRNA SYNTHETASE"/>
    <property type="match status" value="1"/>
</dbReference>
<dbReference type="Pfam" id="PF02272">
    <property type="entry name" value="DHHA1"/>
    <property type="match status" value="1"/>
</dbReference>
<dbReference type="Pfam" id="PF01411">
    <property type="entry name" value="tRNA-synt_2c"/>
    <property type="match status" value="1"/>
</dbReference>
<dbReference type="Pfam" id="PF07973">
    <property type="entry name" value="tRNA_SAD"/>
    <property type="match status" value="1"/>
</dbReference>
<dbReference type="PRINTS" id="PR00980">
    <property type="entry name" value="TRNASYNTHALA"/>
</dbReference>
<dbReference type="SMART" id="SM00863">
    <property type="entry name" value="tRNA_SAD"/>
    <property type="match status" value="1"/>
</dbReference>
<dbReference type="SUPFAM" id="SSF55681">
    <property type="entry name" value="Class II aaRS and biotin synthetases"/>
    <property type="match status" value="1"/>
</dbReference>
<dbReference type="SUPFAM" id="SSF101353">
    <property type="entry name" value="Putative anticodon-binding domain of alanyl-tRNA synthetase (AlaRS)"/>
    <property type="match status" value="1"/>
</dbReference>
<dbReference type="SUPFAM" id="SSF55186">
    <property type="entry name" value="ThrRS/AlaRS common domain"/>
    <property type="match status" value="1"/>
</dbReference>
<dbReference type="SUPFAM" id="SSF50447">
    <property type="entry name" value="Translation proteins"/>
    <property type="match status" value="1"/>
</dbReference>
<dbReference type="PROSITE" id="PS50860">
    <property type="entry name" value="AA_TRNA_LIGASE_II_ALA"/>
    <property type="match status" value="1"/>
</dbReference>
<accession>Q04QG6</accession>
<name>SYA_LEPBJ</name>
<gene>
    <name evidence="1" type="primary">alaS</name>
    <name type="ordered locus">LBJ_2392</name>
</gene>
<feature type="chain" id="PRO_0000347657" description="Alanine--tRNA ligase">
    <location>
        <begin position="1"/>
        <end position="940"/>
    </location>
</feature>
<feature type="binding site" evidence="1">
    <location>
        <position position="581"/>
    </location>
    <ligand>
        <name>Zn(2+)</name>
        <dbReference type="ChEBI" id="CHEBI:29105"/>
    </ligand>
</feature>
<feature type="binding site" evidence="1">
    <location>
        <position position="585"/>
    </location>
    <ligand>
        <name>Zn(2+)</name>
        <dbReference type="ChEBI" id="CHEBI:29105"/>
    </ligand>
</feature>
<feature type="binding site" evidence="1">
    <location>
        <position position="683"/>
    </location>
    <ligand>
        <name>Zn(2+)</name>
        <dbReference type="ChEBI" id="CHEBI:29105"/>
    </ligand>
</feature>
<feature type="binding site" evidence="1">
    <location>
        <position position="687"/>
    </location>
    <ligand>
        <name>Zn(2+)</name>
        <dbReference type="ChEBI" id="CHEBI:29105"/>
    </ligand>
</feature>